<dbReference type="EMBL" id="CP000440">
    <property type="protein sequence ID" value="ABI85842.1"/>
    <property type="molecule type" value="Genomic_DNA"/>
</dbReference>
<dbReference type="RefSeq" id="WP_006752930.1">
    <property type="nucleotide sequence ID" value="NZ_CP009798.1"/>
</dbReference>
<dbReference type="SMR" id="Q0BJ31"/>
<dbReference type="GeneID" id="93084303"/>
<dbReference type="KEGG" id="bam:Bamb_0282"/>
<dbReference type="PATRIC" id="fig|339670.21.peg.1338"/>
<dbReference type="eggNOG" id="COG0097">
    <property type="taxonomic scope" value="Bacteria"/>
</dbReference>
<dbReference type="Proteomes" id="UP000000662">
    <property type="component" value="Chromosome 1"/>
</dbReference>
<dbReference type="GO" id="GO:0022625">
    <property type="term" value="C:cytosolic large ribosomal subunit"/>
    <property type="evidence" value="ECO:0007669"/>
    <property type="project" value="TreeGrafter"/>
</dbReference>
<dbReference type="GO" id="GO:0019843">
    <property type="term" value="F:rRNA binding"/>
    <property type="evidence" value="ECO:0007669"/>
    <property type="project" value="UniProtKB-UniRule"/>
</dbReference>
<dbReference type="GO" id="GO:0003735">
    <property type="term" value="F:structural constituent of ribosome"/>
    <property type="evidence" value="ECO:0007669"/>
    <property type="project" value="InterPro"/>
</dbReference>
<dbReference type="GO" id="GO:0002181">
    <property type="term" value="P:cytoplasmic translation"/>
    <property type="evidence" value="ECO:0007669"/>
    <property type="project" value="TreeGrafter"/>
</dbReference>
<dbReference type="FunFam" id="3.90.930.12:FF:000001">
    <property type="entry name" value="50S ribosomal protein L6"/>
    <property type="match status" value="1"/>
</dbReference>
<dbReference type="Gene3D" id="3.90.930.12">
    <property type="entry name" value="Ribosomal protein L6, alpha-beta domain"/>
    <property type="match status" value="2"/>
</dbReference>
<dbReference type="HAMAP" id="MF_01365_B">
    <property type="entry name" value="Ribosomal_uL6_B"/>
    <property type="match status" value="1"/>
</dbReference>
<dbReference type="InterPro" id="IPR000702">
    <property type="entry name" value="Ribosomal_uL6-like"/>
</dbReference>
<dbReference type="InterPro" id="IPR036789">
    <property type="entry name" value="Ribosomal_uL6-like_a/b-dom_sf"/>
</dbReference>
<dbReference type="InterPro" id="IPR020040">
    <property type="entry name" value="Ribosomal_uL6_a/b-dom"/>
</dbReference>
<dbReference type="InterPro" id="IPR019906">
    <property type="entry name" value="Ribosomal_uL6_bac-type"/>
</dbReference>
<dbReference type="InterPro" id="IPR002358">
    <property type="entry name" value="Ribosomal_uL6_CS"/>
</dbReference>
<dbReference type="NCBIfam" id="TIGR03654">
    <property type="entry name" value="L6_bact"/>
    <property type="match status" value="1"/>
</dbReference>
<dbReference type="PANTHER" id="PTHR11655">
    <property type="entry name" value="60S/50S RIBOSOMAL PROTEIN L6/L9"/>
    <property type="match status" value="1"/>
</dbReference>
<dbReference type="PANTHER" id="PTHR11655:SF14">
    <property type="entry name" value="LARGE RIBOSOMAL SUBUNIT PROTEIN UL6M"/>
    <property type="match status" value="1"/>
</dbReference>
<dbReference type="Pfam" id="PF00347">
    <property type="entry name" value="Ribosomal_L6"/>
    <property type="match status" value="2"/>
</dbReference>
<dbReference type="PIRSF" id="PIRSF002162">
    <property type="entry name" value="Ribosomal_L6"/>
    <property type="match status" value="1"/>
</dbReference>
<dbReference type="PRINTS" id="PR00059">
    <property type="entry name" value="RIBOSOMALL6"/>
</dbReference>
<dbReference type="SUPFAM" id="SSF56053">
    <property type="entry name" value="Ribosomal protein L6"/>
    <property type="match status" value="2"/>
</dbReference>
<dbReference type="PROSITE" id="PS00525">
    <property type="entry name" value="RIBOSOMAL_L6_1"/>
    <property type="match status" value="1"/>
</dbReference>
<accession>Q0BJ31</accession>
<name>RL6_BURCM</name>
<keyword id="KW-0687">Ribonucleoprotein</keyword>
<keyword id="KW-0689">Ribosomal protein</keyword>
<keyword id="KW-0694">RNA-binding</keyword>
<keyword id="KW-0699">rRNA-binding</keyword>
<evidence type="ECO:0000255" key="1">
    <source>
        <dbReference type="HAMAP-Rule" id="MF_01365"/>
    </source>
</evidence>
<evidence type="ECO:0000305" key="2"/>
<organism>
    <name type="scientific">Burkholderia ambifaria (strain ATCC BAA-244 / DSM 16087 / CCUG 44356 / LMG 19182 / AMMD)</name>
    <name type="common">Burkholderia cepacia (strain AMMD)</name>
    <dbReference type="NCBI Taxonomy" id="339670"/>
    <lineage>
        <taxon>Bacteria</taxon>
        <taxon>Pseudomonadati</taxon>
        <taxon>Pseudomonadota</taxon>
        <taxon>Betaproteobacteria</taxon>
        <taxon>Burkholderiales</taxon>
        <taxon>Burkholderiaceae</taxon>
        <taxon>Burkholderia</taxon>
        <taxon>Burkholderia cepacia complex</taxon>
    </lineage>
</organism>
<sequence>MSRVGKSPIALQGAEVKLADGAITVKGPLGTITQAINPLVNVANNDGTLNLSPVDESREANALSGTMRAIIANAVQGVTKGFERKLTLVGVGYRAQAQGDKLNLSLGFSHPVVHQMPEGVKAETPTQTEIVIKGINKQQVGQVAAEVRGYRPPEPYKGKGVRYSDEVVILKETKKK</sequence>
<proteinExistence type="inferred from homology"/>
<feature type="chain" id="PRO_1000055203" description="Large ribosomal subunit protein uL6">
    <location>
        <begin position="1"/>
        <end position="176"/>
    </location>
</feature>
<reference key="1">
    <citation type="submission" date="2006-08" db="EMBL/GenBank/DDBJ databases">
        <title>Complete sequence of chromosome 1 of Burkholderia cepacia AMMD.</title>
        <authorList>
            <person name="Copeland A."/>
            <person name="Lucas S."/>
            <person name="Lapidus A."/>
            <person name="Barry K."/>
            <person name="Detter J.C."/>
            <person name="Glavina del Rio T."/>
            <person name="Hammon N."/>
            <person name="Israni S."/>
            <person name="Pitluck S."/>
            <person name="Bruce D."/>
            <person name="Chain P."/>
            <person name="Malfatti S."/>
            <person name="Shin M."/>
            <person name="Vergez L."/>
            <person name="Schmutz J."/>
            <person name="Larimer F."/>
            <person name="Land M."/>
            <person name="Hauser L."/>
            <person name="Kyrpides N."/>
            <person name="Kim E."/>
            <person name="Parke J."/>
            <person name="Coenye T."/>
            <person name="Konstantinidis K."/>
            <person name="Ramette A."/>
            <person name="Tiedje J."/>
            <person name="Richardson P."/>
        </authorList>
    </citation>
    <scope>NUCLEOTIDE SEQUENCE [LARGE SCALE GENOMIC DNA]</scope>
    <source>
        <strain>ATCC BAA-244 / DSM 16087 / CCUG 44356 / LMG 19182 / AMMD</strain>
    </source>
</reference>
<comment type="function">
    <text evidence="1">This protein binds to the 23S rRNA, and is important in its secondary structure. It is located near the subunit interface in the base of the L7/L12 stalk, and near the tRNA binding site of the peptidyltransferase center.</text>
</comment>
<comment type="subunit">
    <text evidence="1">Part of the 50S ribosomal subunit.</text>
</comment>
<comment type="similarity">
    <text evidence="1">Belongs to the universal ribosomal protein uL6 family.</text>
</comment>
<protein>
    <recommendedName>
        <fullName evidence="1">Large ribosomal subunit protein uL6</fullName>
    </recommendedName>
    <alternativeName>
        <fullName evidence="2">50S ribosomal protein L6</fullName>
    </alternativeName>
</protein>
<gene>
    <name evidence="1" type="primary">rplF</name>
    <name type="ordered locus">Bamb_0282</name>
</gene>